<keyword id="KW-1003">Cell membrane</keyword>
<keyword id="KW-0342">GTP-binding</keyword>
<keyword id="KW-0378">Hydrolase</keyword>
<keyword id="KW-0472">Membrane</keyword>
<keyword id="KW-0547">Nucleotide-binding</keyword>
<keyword id="KW-0648">Protein biosynthesis</keyword>
<keyword id="KW-1185">Reference proteome</keyword>
<gene>
    <name evidence="1" type="primary">lepA</name>
    <name type="ordered locus">SERP1152</name>
</gene>
<feature type="chain" id="PRO_0000176347" description="Elongation factor 4">
    <location>
        <begin position="1"/>
        <end position="607"/>
    </location>
</feature>
<feature type="domain" description="tr-type G">
    <location>
        <begin position="11"/>
        <end position="193"/>
    </location>
</feature>
<feature type="binding site" evidence="1">
    <location>
        <begin position="23"/>
        <end position="28"/>
    </location>
    <ligand>
        <name>GTP</name>
        <dbReference type="ChEBI" id="CHEBI:37565"/>
    </ligand>
</feature>
<feature type="binding site" evidence="1">
    <location>
        <begin position="140"/>
        <end position="143"/>
    </location>
    <ligand>
        <name>GTP</name>
        <dbReference type="ChEBI" id="CHEBI:37565"/>
    </ligand>
</feature>
<accession>Q5HNW2</accession>
<evidence type="ECO:0000255" key="1">
    <source>
        <dbReference type="HAMAP-Rule" id="MF_00071"/>
    </source>
</evidence>
<organism>
    <name type="scientific">Staphylococcus epidermidis (strain ATCC 35984 / DSM 28319 / BCRC 17069 / CCUG 31568 / BM 3577 / RP62A)</name>
    <dbReference type="NCBI Taxonomy" id="176279"/>
    <lineage>
        <taxon>Bacteria</taxon>
        <taxon>Bacillati</taxon>
        <taxon>Bacillota</taxon>
        <taxon>Bacilli</taxon>
        <taxon>Bacillales</taxon>
        <taxon>Staphylococcaceae</taxon>
        <taxon>Staphylococcus</taxon>
    </lineage>
</organism>
<proteinExistence type="inferred from homology"/>
<comment type="function">
    <text evidence="1">Required for accurate and efficient protein synthesis under certain stress conditions. May act as a fidelity factor of the translation reaction, by catalyzing a one-codon backward translocation of tRNAs on improperly translocated ribosomes. Back-translocation proceeds from a post-translocation (POST) complex to a pre-translocation (PRE) complex, thus giving elongation factor G a second chance to translocate the tRNAs correctly. Binds to ribosomes in a GTP-dependent manner.</text>
</comment>
<comment type="catalytic activity">
    <reaction evidence="1">
        <text>GTP + H2O = GDP + phosphate + H(+)</text>
        <dbReference type="Rhea" id="RHEA:19669"/>
        <dbReference type="ChEBI" id="CHEBI:15377"/>
        <dbReference type="ChEBI" id="CHEBI:15378"/>
        <dbReference type="ChEBI" id="CHEBI:37565"/>
        <dbReference type="ChEBI" id="CHEBI:43474"/>
        <dbReference type="ChEBI" id="CHEBI:58189"/>
        <dbReference type="EC" id="3.6.5.n1"/>
    </reaction>
</comment>
<comment type="subcellular location">
    <subcellularLocation>
        <location evidence="1">Cell membrane</location>
        <topology evidence="1">Peripheral membrane protein</topology>
        <orientation evidence="1">Cytoplasmic side</orientation>
    </subcellularLocation>
</comment>
<comment type="similarity">
    <text evidence="1">Belongs to the TRAFAC class translation factor GTPase superfamily. Classic translation factor GTPase family. LepA subfamily.</text>
</comment>
<reference key="1">
    <citation type="journal article" date="2005" name="J. Bacteriol.">
        <title>Insights on evolution of virulence and resistance from the complete genome analysis of an early methicillin-resistant Staphylococcus aureus strain and a biofilm-producing methicillin-resistant Staphylococcus epidermidis strain.</title>
        <authorList>
            <person name="Gill S.R."/>
            <person name="Fouts D.E."/>
            <person name="Archer G.L."/>
            <person name="Mongodin E.F."/>
            <person name="DeBoy R.T."/>
            <person name="Ravel J."/>
            <person name="Paulsen I.T."/>
            <person name="Kolonay J.F."/>
            <person name="Brinkac L.M."/>
            <person name="Beanan M.J."/>
            <person name="Dodson R.J."/>
            <person name="Daugherty S.C."/>
            <person name="Madupu R."/>
            <person name="Angiuoli S.V."/>
            <person name="Durkin A.S."/>
            <person name="Haft D.H."/>
            <person name="Vamathevan J.J."/>
            <person name="Khouri H."/>
            <person name="Utterback T.R."/>
            <person name="Lee C."/>
            <person name="Dimitrov G."/>
            <person name="Jiang L."/>
            <person name="Qin H."/>
            <person name="Weidman J."/>
            <person name="Tran K."/>
            <person name="Kang K.H."/>
            <person name="Hance I.R."/>
            <person name="Nelson K.E."/>
            <person name="Fraser C.M."/>
        </authorList>
    </citation>
    <scope>NUCLEOTIDE SEQUENCE [LARGE SCALE GENOMIC DNA]</scope>
    <source>
        <strain>ATCC 35984 / DSM 28319 / BCRC 17069 / CCUG 31568 / BM 3577 / RP62A</strain>
    </source>
</reference>
<protein>
    <recommendedName>
        <fullName evidence="1">Elongation factor 4</fullName>
        <shortName evidence="1">EF-4</shortName>
        <ecNumber evidence="1">3.6.5.n1</ecNumber>
    </recommendedName>
    <alternativeName>
        <fullName evidence="1">Ribosomal back-translocase LepA</fullName>
    </alternativeName>
</protein>
<name>LEPA_STAEQ</name>
<dbReference type="EC" id="3.6.5.n1" evidence="1"/>
<dbReference type="EMBL" id="CP000029">
    <property type="protein sequence ID" value="AAW54487.1"/>
    <property type="molecule type" value="Genomic_DNA"/>
</dbReference>
<dbReference type="RefSeq" id="WP_001831284.1">
    <property type="nucleotide sequence ID" value="NC_002976.3"/>
</dbReference>
<dbReference type="SMR" id="Q5HNW2"/>
<dbReference type="STRING" id="176279.SERP1152"/>
<dbReference type="GeneID" id="50018613"/>
<dbReference type="KEGG" id="ser:SERP1152"/>
<dbReference type="eggNOG" id="COG0481">
    <property type="taxonomic scope" value="Bacteria"/>
</dbReference>
<dbReference type="HOGENOM" id="CLU_009995_3_3_9"/>
<dbReference type="Proteomes" id="UP000000531">
    <property type="component" value="Chromosome"/>
</dbReference>
<dbReference type="GO" id="GO:0005886">
    <property type="term" value="C:plasma membrane"/>
    <property type="evidence" value="ECO:0007669"/>
    <property type="project" value="UniProtKB-SubCell"/>
</dbReference>
<dbReference type="GO" id="GO:0005525">
    <property type="term" value="F:GTP binding"/>
    <property type="evidence" value="ECO:0007669"/>
    <property type="project" value="UniProtKB-UniRule"/>
</dbReference>
<dbReference type="GO" id="GO:0003924">
    <property type="term" value="F:GTPase activity"/>
    <property type="evidence" value="ECO:0007669"/>
    <property type="project" value="UniProtKB-UniRule"/>
</dbReference>
<dbReference type="GO" id="GO:0043022">
    <property type="term" value="F:ribosome binding"/>
    <property type="evidence" value="ECO:0007669"/>
    <property type="project" value="UniProtKB-UniRule"/>
</dbReference>
<dbReference type="GO" id="GO:0003746">
    <property type="term" value="F:translation elongation factor activity"/>
    <property type="evidence" value="ECO:0007669"/>
    <property type="project" value="UniProtKB-UniRule"/>
</dbReference>
<dbReference type="GO" id="GO:0045727">
    <property type="term" value="P:positive regulation of translation"/>
    <property type="evidence" value="ECO:0007669"/>
    <property type="project" value="UniProtKB-UniRule"/>
</dbReference>
<dbReference type="CDD" id="cd03699">
    <property type="entry name" value="EF4_II"/>
    <property type="match status" value="1"/>
</dbReference>
<dbReference type="CDD" id="cd16260">
    <property type="entry name" value="EF4_III"/>
    <property type="match status" value="1"/>
</dbReference>
<dbReference type="CDD" id="cd01890">
    <property type="entry name" value="LepA"/>
    <property type="match status" value="1"/>
</dbReference>
<dbReference type="CDD" id="cd03709">
    <property type="entry name" value="lepA_C"/>
    <property type="match status" value="1"/>
</dbReference>
<dbReference type="FunFam" id="3.40.50.300:FF:000078">
    <property type="entry name" value="Elongation factor 4"/>
    <property type="match status" value="1"/>
</dbReference>
<dbReference type="FunFam" id="2.40.30.10:FF:000015">
    <property type="entry name" value="Translation factor GUF1, mitochondrial"/>
    <property type="match status" value="1"/>
</dbReference>
<dbReference type="FunFam" id="3.30.70.240:FF:000007">
    <property type="entry name" value="Translation factor GUF1, mitochondrial"/>
    <property type="match status" value="1"/>
</dbReference>
<dbReference type="FunFam" id="3.30.70.2570:FF:000001">
    <property type="entry name" value="Translation factor GUF1, mitochondrial"/>
    <property type="match status" value="1"/>
</dbReference>
<dbReference type="FunFam" id="3.30.70.870:FF:000004">
    <property type="entry name" value="Translation factor GUF1, mitochondrial"/>
    <property type="match status" value="1"/>
</dbReference>
<dbReference type="Gene3D" id="3.30.70.240">
    <property type="match status" value="1"/>
</dbReference>
<dbReference type="Gene3D" id="3.30.70.2570">
    <property type="entry name" value="Elongation factor 4, C-terminal domain"/>
    <property type="match status" value="1"/>
</dbReference>
<dbReference type="Gene3D" id="3.30.70.870">
    <property type="entry name" value="Elongation Factor G (Translational Gtpase), domain 3"/>
    <property type="match status" value="1"/>
</dbReference>
<dbReference type="Gene3D" id="3.40.50.300">
    <property type="entry name" value="P-loop containing nucleotide triphosphate hydrolases"/>
    <property type="match status" value="1"/>
</dbReference>
<dbReference type="Gene3D" id="2.40.30.10">
    <property type="entry name" value="Translation factors"/>
    <property type="match status" value="1"/>
</dbReference>
<dbReference type="HAMAP" id="MF_00071">
    <property type="entry name" value="LepA"/>
    <property type="match status" value="1"/>
</dbReference>
<dbReference type="InterPro" id="IPR006297">
    <property type="entry name" value="EF-4"/>
</dbReference>
<dbReference type="InterPro" id="IPR041095">
    <property type="entry name" value="EFG_II"/>
</dbReference>
<dbReference type="InterPro" id="IPR035647">
    <property type="entry name" value="EFG_III/V"/>
</dbReference>
<dbReference type="InterPro" id="IPR000640">
    <property type="entry name" value="EFG_V-like"/>
</dbReference>
<dbReference type="InterPro" id="IPR004161">
    <property type="entry name" value="EFTu-like_2"/>
</dbReference>
<dbReference type="InterPro" id="IPR031157">
    <property type="entry name" value="G_TR_CS"/>
</dbReference>
<dbReference type="InterPro" id="IPR038363">
    <property type="entry name" value="LepA_C_sf"/>
</dbReference>
<dbReference type="InterPro" id="IPR013842">
    <property type="entry name" value="LepA_CTD"/>
</dbReference>
<dbReference type="InterPro" id="IPR035654">
    <property type="entry name" value="LepA_IV"/>
</dbReference>
<dbReference type="InterPro" id="IPR027417">
    <property type="entry name" value="P-loop_NTPase"/>
</dbReference>
<dbReference type="InterPro" id="IPR005225">
    <property type="entry name" value="Small_GTP-bd"/>
</dbReference>
<dbReference type="InterPro" id="IPR000795">
    <property type="entry name" value="T_Tr_GTP-bd_dom"/>
</dbReference>
<dbReference type="NCBIfam" id="TIGR01393">
    <property type="entry name" value="lepA"/>
    <property type="match status" value="1"/>
</dbReference>
<dbReference type="NCBIfam" id="TIGR00231">
    <property type="entry name" value="small_GTP"/>
    <property type="match status" value="1"/>
</dbReference>
<dbReference type="PANTHER" id="PTHR43512:SF4">
    <property type="entry name" value="TRANSLATION FACTOR GUF1 HOMOLOG, CHLOROPLASTIC"/>
    <property type="match status" value="1"/>
</dbReference>
<dbReference type="PANTHER" id="PTHR43512">
    <property type="entry name" value="TRANSLATION FACTOR GUF1-RELATED"/>
    <property type="match status" value="1"/>
</dbReference>
<dbReference type="Pfam" id="PF00679">
    <property type="entry name" value="EFG_C"/>
    <property type="match status" value="1"/>
</dbReference>
<dbReference type="Pfam" id="PF14492">
    <property type="entry name" value="EFG_III"/>
    <property type="match status" value="1"/>
</dbReference>
<dbReference type="Pfam" id="PF00009">
    <property type="entry name" value="GTP_EFTU"/>
    <property type="match status" value="1"/>
</dbReference>
<dbReference type="Pfam" id="PF03144">
    <property type="entry name" value="GTP_EFTU_D2"/>
    <property type="match status" value="1"/>
</dbReference>
<dbReference type="Pfam" id="PF06421">
    <property type="entry name" value="LepA_C"/>
    <property type="match status" value="1"/>
</dbReference>
<dbReference type="PRINTS" id="PR00315">
    <property type="entry name" value="ELONGATNFCT"/>
</dbReference>
<dbReference type="SMART" id="SM00838">
    <property type="entry name" value="EFG_C"/>
    <property type="match status" value="1"/>
</dbReference>
<dbReference type="SUPFAM" id="SSF54980">
    <property type="entry name" value="EF-G C-terminal domain-like"/>
    <property type="match status" value="2"/>
</dbReference>
<dbReference type="SUPFAM" id="SSF52540">
    <property type="entry name" value="P-loop containing nucleoside triphosphate hydrolases"/>
    <property type="match status" value="1"/>
</dbReference>
<dbReference type="PROSITE" id="PS00301">
    <property type="entry name" value="G_TR_1"/>
    <property type="match status" value="1"/>
</dbReference>
<dbReference type="PROSITE" id="PS51722">
    <property type="entry name" value="G_TR_2"/>
    <property type="match status" value="1"/>
</dbReference>
<sequence length="607" mass="68275">MDKQERYNRRENIRNFSIIAHIDHGKSTLADRILENTKSVETREMQDQLLDSMDLERERGITIKLNAVRLKYEAKDGETYTFHLIDTPGHVDFTYEVSRSLAACEGAILVVDAAQGIEAQTLANVYLALDNDLELLPVVNKIDLPAAEPDRVKQELEDVIGIDQEDVVLASAKSNIGIEEILEKIVDVVPAPDGDPEAPLKALIFDSEYDPYRGVISSIRIIDGVVKAGDRIKMMATGKEFEVTEVGINTPKQLPVEELTVGDVGYIIASIKNVDDSRVGDTITLAERPADKPLQGYKKMNPMVFCGLFPIDNKDYNDLREALEKLQLNDASLEFEPESSQALGFGYRTGFLGMLHMEIIQERIEREFGIELIATAPSVIYQCILKDGSEVSVDNPAQMPERDKIEHIYEPFVKATMMVPNDYVGAVMELCQRKRGQFINMDYLDDIRVNIVYEIPLSEVVFDFFDQLKSNTKGYASFDYEFIENKESNLVKMDILLNGDKVDALSFIVHRDFAYERGKALVEKLKTLIPRQQFEVPVQAAIGQKIVARTNIKSMGKNVLSKCYGGDISRKRKLLEKQKAGKAKMKAVGNVEIPQDAFLAVLKMDDE</sequence>